<organism>
    <name type="scientific">Staphylococcus epidermidis (strain ATCC 35984 / DSM 28319 / BCRC 17069 / CCUG 31568 / BM 3577 / RP62A)</name>
    <dbReference type="NCBI Taxonomy" id="176279"/>
    <lineage>
        <taxon>Bacteria</taxon>
        <taxon>Bacillati</taxon>
        <taxon>Bacillota</taxon>
        <taxon>Bacilli</taxon>
        <taxon>Bacillales</taxon>
        <taxon>Staphylococcaceae</taxon>
        <taxon>Staphylococcus</taxon>
    </lineage>
</organism>
<dbReference type="EC" id="2.7.1.-" evidence="1"/>
<dbReference type="EMBL" id="CP000029">
    <property type="protein sequence ID" value="AAW55221.1"/>
    <property type="molecule type" value="Genomic_DNA"/>
</dbReference>
<dbReference type="RefSeq" id="WP_001830059.1">
    <property type="nucleotide sequence ID" value="NC_002976.3"/>
</dbReference>
<dbReference type="SMR" id="Q5HLT2"/>
<dbReference type="STRING" id="176279.SERP1900"/>
<dbReference type="KEGG" id="ser:SERP1900"/>
<dbReference type="eggNOG" id="COG1263">
    <property type="taxonomic scope" value="Bacteria"/>
</dbReference>
<dbReference type="eggNOG" id="COG1264">
    <property type="taxonomic scope" value="Bacteria"/>
</dbReference>
<dbReference type="HOGENOM" id="CLU_012312_2_0_9"/>
<dbReference type="UniPathway" id="UPA00544"/>
<dbReference type="Proteomes" id="UP000000531">
    <property type="component" value="Chromosome"/>
</dbReference>
<dbReference type="GO" id="GO:0005886">
    <property type="term" value="C:plasma membrane"/>
    <property type="evidence" value="ECO:0007669"/>
    <property type="project" value="UniProtKB-SubCell"/>
</dbReference>
<dbReference type="GO" id="GO:0016301">
    <property type="term" value="F:kinase activity"/>
    <property type="evidence" value="ECO:0007669"/>
    <property type="project" value="UniProtKB-KW"/>
</dbReference>
<dbReference type="GO" id="GO:0008982">
    <property type="term" value="F:protein-N(PI)-phosphohistidine-sugar phosphotransferase activity"/>
    <property type="evidence" value="ECO:0007669"/>
    <property type="project" value="InterPro"/>
</dbReference>
<dbReference type="GO" id="GO:0090588">
    <property type="term" value="F:protein-phosphocysteine-N-acetylmuramate phosphotransferase system transporter activity"/>
    <property type="evidence" value="ECO:0007669"/>
    <property type="project" value="TreeGrafter"/>
</dbReference>
<dbReference type="GO" id="GO:0009254">
    <property type="term" value="P:peptidoglycan turnover"/>
    <property type="evidence" value="ECO:0007669"/>
    <property type="project" value="UniProtKB-UniPathway"/>
</dbReference>
<dbReference type="GO" id="GO:0009401">
    <property type="term" value="P:phosphoenolpyruvate-dependent sugar phosphotransferase system"/>
    <property type="evidence" value="ECO:0007669"/>
    <property type="project" value="UniProtKB-KW"/>
</dbReference>
<dbReference type="CDD" id="cd00212">
    <property type="entry name" value="PTS_IIB_glc"/>
    <property type="match status" value="1"/>
</dbReference>
<dbReference type="FunFam" id="3.30.1360.60:FF:000001">
    <property type="entry name" value="PTS system glucose-specific IIBC component PtsG"/>
    <property type="match status" value="1"/>
</dbReference>
<dbReference type="Gene3D" id="3.30.1360.60">
    <property type="entry name" value="Glucose permease domain IIB"/>
    <property type="match status" value="1"/>
</dbReference>
<dbReference type="InterPro" id="IPR036878">
    <property type="entry name" value="Glu_permease_IIB"/>
</dbReference>
<dbReference type="InterPro" id="IPR018113">
    <property type="entry name" value="PTrfase_EIIB_Cys"/>
</dbReference>
<dbReference type="InterPro" id="IPR003352">
    <property type="entry name" value="PTS_EIIC"/>
</dbReference>
<dbReference type="InterPro" id="IPR013013">
    <property type="entry name" value="PTS_EIIC_1"/>
</dbReference>
<dbReference type="InterPro" id="IPR001996">
    <property type="entry name" value="PTS_IIB_1"/>
</dbReference>
<dbReference type="InterPro" id="IPR050558">
    <property type="entry name" value="PTS_Sugar-Specific_Components"/>
</dbReference>
<dbReference type="PANTHER" id="PTHR30175">
    <property type="entry name" value="PHOSPHOTRANSFERASE SYSTEM TRANSPORT PROTEIN"/>
    <property type="match status" value="1"/>
</dbReference>
<dbReference type="PANTHER" id="PTHR30175:SF3">
    <property type="entry name" value="PTS SYSTEM N-ACETYLMURAMIC ACID-SPECIFIC EIIBC COMPONENT"/>
    <property type="match status" value="1"/>
</dbReference>
<dbReference type="Pfam" id="PF00367">
    <property type="entry name" value="PTS_EIIB"/>
    <property type="match status" value="1"/>
</dbReference>
<dbReference type="Pfam" id="PF02378">
    <property type="entry name" value="PTS_EIIC"/>
    <property type="match status" value="1"/>
</dbReference>
<dbReference type="SUPFAM" id="SSF55604">
    <property type="entry name" value="Glucose permease domain IIB"/>
    <property type="match status" value="1"/>
</dbReference>
<dbReference type="PROSITE" id="PS51098">
    <property type="entry name" value="PTS_EIIB_TYPE_1"/>
    <property type="match status" value="1"/>
</dbReference>
<dbReference type="PROSITE" id="PS01035">
    <property type="entry name" value="PTS_EIIB_TYPE_1_CYS"/>
    <property type="match status" value="1"/>
</dbReference>
<dbReference type="PROSITE" id="PS51103">
    <property type="entry name" value="PTS_EIIC_TYPE_1"/>
    <property type="match status" value="1"/>
</dbReference>
<keyword id="KW-1003">Cell membrane</keyword>
<keyword id="KW-0418">Kinase</keyword>
<keyword id="KW-0472">Membrane</keyword>
<keyword id="KW-0598">Phosphotransferase system</keyword>
<keyword id="KW-1185">Reference proteome</keyword>
<keyword id="KW-0762">Sugar transport</keyword>
<keyword id="KW-0808">Transferase</keyword>
<keyword id="KW-0812">Transmembrane</keyword>
<keyword id="KW-1133">Transmembrane helix</keyword>
<keyword id="KW-0813">Transport</keyword>
<name>PTXBC_STAEQ</name>
<gene>
    <name type="ordered locus">SERP1900</name>
</gene>
<protein>
    <recommendedName>
        <fullName evidence="1">PTS system MurNAc-GlcNAc-specific EIIBC component</fullName>
    </recommendedName>
    <domain>
        <recommendedName>
            <fullName>MurNAc-GlcNAc-specific phosphotransferase enzyme IIB component</fullName>
            <ecNumber evidence="1">2.7.1.-</ecNumber>
        </recommendedName>
        <alternativeName>
            <fullName>PTS system MurNAc-GlcNAc-specific EIIB component</fullName>
        </alternativeName>
    </domain>
    <domain>
        <recommendedName>
            <fullName>MurNAc-GlcNAc permease IIC component</fullName>
        </recommendedName>
        <alternativeName>
            <fullName>PTS system MurNAc-GlcNAc-specific EIIC component</fullName>
        </alternativeName>
    </domain>
</protein>
<sequence length="474" mass="50266">MSKEERLAKDITHALGGSQNISNIIHCMTRVRIKVHNDAKVNYDELKSINGVLGVVEDERIQVVVGPGIVNKVAKLMADQSGATLAEETTENQSYKSQAEKRAYEHKKQFQSQRKQSKWNKVLKSIANIFIPLIPAFIGAGLIGGIAAILSNLLTAGSISGQWIQQIVTVLNVIKDGMLFYLAIFTGINSAKVFGATPGLGGVIGGTTLLTGITDENPIKNIFTGEHLAAGQGGIIGVIFAVWLLSMVEKRLHKIIPNSIDIIVTPTITLLLIGLLTIFIIMPLAGFVSDGLVYVINWIIGVGGIFSGFIIGAFFLPLVMLGLHHIFTPIHIELINQTGSTYLLPIAAMAGAGQVGAAIALWVRCGKNKELRNTLKGALPVGFLGIGEPLIYGVTLPLGRPFFTACIGGGVGGAVIGGIGHIGATAVGPSGISLLPLIANNMYLGYIVGLLAAYAGGFIFTYFFGTTKEMRNPE</sequence>
<accession>Q5HLT2</accession>
<comment type="function">
    <text evidence="1">The phosphoenolpyruvate-dependent sugar phosphotransferase system (sugar PTS), a major carbohydrate active transport system, catalyzes the phosphorylation of incoming sugar substrates concomitantly with their translocation across the cell membrane. This system is involved in the uptake and phosphorylation of MurNAc-GlcNAc, the principle peptidoglycan turnover product of S.aureus, yielding cytoplasmic MurNAc 6P-GlcNAc.</text>
</comment>
<comment type="catalytic activity">
    <reaction evidence="1">
        <text>N-acetyl-beta-D-muramate-(1-&gt;4)-N-acetyl-D-glucosamine(out) + N(pros)-phospho-L-histidyl-[protein] = 6-phospho-N-acetyl-beta-D-muramate-(1-&gt;4)-N-acetyl-D-glucosamine(in) + L-histidyl-[protein]</text>
        <dbReference type="Rhea" id="RHEA:66784"/>
        <dbReference type="Rhea" id="RHEA-COMP:9745"/>
        <dbReference type="Rhea" id="RHEA-COMP:9746"/>
        <dbReference type="ChEBI" id="CHEBI:29979"/>
        <dbReference type="ChEBI" id="CHEBI:64837"/>
        <dbReference type="ChEBI" id="CHEBI:167476"/>
        <dbReference type="ChEBI" id="CHEBI:167477"/>
    </reaction>
    <physiologicalReaction direction="left-to-right" evidence="1">
        <dbReference type="Rhea" id="RHEA:66785"/>
    </physiologicalReaction>
</comment>
<comment type="pathway">
    <text evidence="1">Cell wall biogenesis; peptidoglycan recycling.</text>
</comment>
<comment type="subcellular location">
    <subcellularLocation>
        <location evidence="3">Cell membrane</location>
        <topology evidence="3">Multi-pass membrane protein</topology>
    </subcellularLocation>
</comment>
<comment type="domain">
    <text>The EIIB domain is phosphorylated by phospho-EIIA on a cysteinyl or histidyl residue, depending on the transported sugar. Then, it transfers the phosphoryl group to the sugar substrate concomitantly with the sugar uptake processed by the EIIC domain.</text>
</comment>
<comment type="domain">
    <text>The EIIC domain forms the PTS system translocation channel and contains the specific substrate-binding site.</text>
</comment>
<proteinExistence type="inferred from homology"/>
<feature type="chain" id="PRO_0000272181" description="PTS system MurNAc-GlcNAc-specific EIIBC component">
    <location>
        <begin position="1"/>
        <end position="474"/>
    </location>
</feature>
<feature type="transmembrane region" description="Helical" evidence="3">
    <location>
        <begin position="129"/>
        <end position="149"/>
    </location>
</feature>
<feature type="transmembrane region" description="Helical" evidence="3">
    <location>
        <begin position="167"/>
        <end position="187"/>
    </location>
</feature>
<feature type="transmembrane region" description="Helical" evidence="3">
    <location>
        <begin position="193"/>
        <end position="213"/>
    </location>
</feature>
<feature type="transmembrane region" description="Helical" evidence="3">
    <location>
        <begin position="228"/>
        <end position="248"/>
    </location>
</feature>
<feature type="transmembrane region" description="Helical" evidence="3">
    <location>
        <begin position="268"/>
        <end position="288"/>
    </location>
</feature>
<feature type="transmembrane region" description="Helical" evidence="3">
    <location>
        <begin position="299"/>
        <end position="319"/>
    </location>
</feature>
<feature type="transmembrane region" description="Helical" evidence="3">
    <location>
        <begin position="343"/>
        <end position="363"/>
    </location>
</feature>
<feature type="transmembrane region" description="Helical" evidence="3">
    <location>
        <begin position="378"/>
        <end position="398"/>
    </location>
</feature>
<feature type="transmembrane region" description="Helical" evidence="3">
    <location>
        <begin position="402"/>
        <end position="422"/>
    </location>
</feature>
<feature type="transmembrane region" description="Helical" evidence="3">
    <location>
        <begin position="444"/>
        <end position="464"/>
    </location>
</feature>
<feature type="domain" description="PTS EIIB type-1" evidence="2">
    <location>
        <begin position="5"/>
        <end position="87"/>
    </location>
</feature>
<feature type="domain" description="PTS EIIC type-1" evidence="3">
    <location>
        <begin position="124"/>
        <end position="474"/>
    </location>
</feature>
<feature type="active site" description="Phosphocysteine intermediate; for EIIB activity" evidence="2">
    <location>
        <position position="27"/>
    </location>
</feature>
<evidence type="ECO:0000250" key="1">
    <source>
        <dbReference type="UniProtKB" id="Q2FK70"/>
    </source>
</evidence>
<evidence type="ECO:0000255" key="2">
    <source>
        <dbReference type="PROSITE-ProRule" id="PRU00421"/>
    </source>
</evidence>
<evidence type="ECO:0000255" key="3">
    <source>
        <dbReference type="PROSITE-ProRule" id="PRU00426"/>
    </source>
</evidence>
<reference key="1">
    <citation type="journal article" date="2005" name="J. Bacteriol.">
        <title>Insights on evolution of virulence and resistance from the complete genome analysis of an early methicillin-resistant Staphylococcus aureus strain and a biofilm-producing methicillin-resistant Staphylococcus epidermidis strain.</title>
        <authorList>
            <person name="Gill S.R."/>
            <person name="Fouts D.E."/>
            <person name="Archer G.L."/>
            <person name="Mongodin E.F."/>
            <person name="DeBoy R.T."/>
            <person name="Ravel J."/>
            <person name="Paulsen I.T."/>
            <person name="Kolonay J.F."/>
            <person name="Brinkac L.M."/>
            <person name="Beanan M.J."/>
            <person name="Dodson R.J."/>
            <person name="Daugherty S.C."/>
            <person name="Madupu R."/>
            <person name="Angiuoli S.V."/>
            <person name="Durkin A.S."/>
            <person name="Haft D.H."/>
            <person name="Vamathevan J.J."/>
            <person name="Khouri H."/>
            <person name="Utterback T.R."/>
            <person name="Lee C."/>
            <person name="Dimitrov G."/>
            <person name="Jiang L."/>
            <person name="Qin H."/>
            <person name="Weidman J."/>
            <person name="Tran K."/>
            <person name="Kang K.H."/>
            <person name="Hance I.R."/>
            <person name="Nelson K.E."/>
            <person name="Fraser C.M."/>
        </authorList>
    </citation>
    <scope>NUCLEOTIDE SEQUENCE [LARGE SCALE GENOMIC DNA]</scope>
    <source>
        <strain>ATCC 35984 / DSM 28319 / BCRC 17069 / CCUG 31568 / BM 3577 / RP62A</strain>
    </source>
</reference>